<dbReference type="EC" id="2.1.1.174" evidence="1"/>
<dbReference type="EMBL" id="CP001103">
    <property type="protein sequence ID" value="AEA96878.1"/>
    <property type="molecule type" value="Genomic_DNA"/>
</dbReference>
<dbReference type="RefSeq" id="WP_012517232.1">
    <property type="nucleotide sequence ID" value="NC_011138.3"/>
</dbReference>
<dbReference type="SMR" id="B4RZB4"/>
<dbReference type="KEGG" id="amc:MADE_1003650"/>
<dbReference type="HOGENOM" id="CLU_040288_4_0_6"/>
<dbReference type="Proteomes" id="UP000001870">
    <property type="component" value="Chromosome"/>
</dbReference>
<dbReference type="GO" id="GO:0005737">
    <property type="term" value="C:cytoplasm"/>
    <property type="evidence" value="ECO:0007669"/>
    <property type="project" value="UniProtKB-SubCell"/>
</dbReference>
<dbReference type="GO" id="GO:0052916">
    <property type="term" value="F:23S rRNA (guanine(1835)-N(2))-methyltransferase activity"/>
    <property type="evidence" value="ECO:0007669"/>
    <property type="project" value="UniProtKB-EC"/>
</dbReference>
<dbReference type="GO" id="GO:0003676">
    <property type="term" value="F:nucleic acid binding"/>
    <property type="evidence" value="ECO:0007669"/>
    <property type="project" value="InterPro"/>
</dbReference>
<dbReference type="CDD" id="cd02440">
    <property type="entry name" value="AdoMet_MTases"/>
    <property type="match status" value="1"/>
</dbReference>
<dbReference type="Gene3D" id="3.40.50.150">
    <property type="entry name" value="Vaccinia Virus protein VP39"/>
    <property type="match status" value="2"/>
</dbReference>
<dbReference type="HAMAP" id="MF_01859">
    <property type="entry name" value="23SrRNA_methyltr_G"/>
    <property type="match status" value="1"/>
</dbReference>
<dbReference type="InterPro" id="IPR002052">
    <property type="entry name" value="DNA_methylase_N6_adenine_CS"/>
</dbReference>
<dbReference type="InterPro" id="IPR017237">
    <property type="entry name" value="rRNA_m2G-MeTrfase_RlmG"/>
</dbReference>
<dbReference type="InterPro" id="IPR046977">
    <property type="entry name" value="RsmC/RlmG"/>
</dbReference>
<dbReference type="InterPro" id="IPR029063">
    <property type="entry name" value="SAM-dependent_MTases_sf"/>
</dbReference>
<dbReference type="InterPro" id="IPR007848">
    <property type="entry name" value="Small_mtfrase_dom"/>
</dbReference>
<dbReference type="PANTHER" id="PTHR47816:SF5">
    <property type="entry name" value="RIBOSOMAL RNA LARGE SUBUNIT METHYLTRANSFERASE G"/>
    <property type="match status" value="1"/>
</dbReference>
<dbReference type="PANTHER" id="PTHR47816">
    <property type="entry name" value="RIBOSOMAL RNA SMALL SUBUNIT METHYLTRANSFERASE C"/>
    <property type="match status" value="1"/>
</dbReference>
<dbReference type="Pfam" id="PF05175">
    <property type="entry name" value="MTS"/>
    <property type="match status" value="1"/>
</dbReference>
<dbReference type="PIRSF" id="PIRSF037565">
    <property type="entry name" value="RRNA_m2G_Mtase_RsmD_prd"/>
    <property type="match status" value="1"/>
</dbReference>
<dbReference type="SUPFAM" id="SSF53335">
    <property type="entry name" value="S-adenosyl-L-methionine-dependent methyltransferases"/>
    <property type="match status" value="1"/>
</dbReference>
<name>RLMG_ALTMD</name>
<protein>
    <recommendedName>
        <fullName evidence="1">Ribosomal RNA large subunit methyltransferase G</fullName>
        <ecNumber evidence="1">2.1.1.174</ecNumber>
    </recommendedName>
    <alternativeName>
        <fullName evidence="1">23S rRNA m2G1835 methyltransferase</fullName>
    </alternativeName>
    <alternativeName>
        <fullName evidence="1">rRNA (guanine-N(2)-)-methyltransferase RlmG</fullName>
    </alternativeName>
</protein>
<keyword id="KW-0963">Cytoplasm</keyword>
<keyword id="KW-0489">Methyltransferase</keyword>
<keyword id="KW-0698">rRNA processing</keyword>
<keyword id="KW-0949">S-adenosyl-L-methionine</keyword>
<keyword id="KW-0808">Transferase</keyword>
<gene>
    <name evidence="1" type="primary">rlmG</name>
    <name type="ordered locus">MADE_1003650</name>
</gene>
<feature type="chain" id="PRO_0000366448" description="Ribosomal RNA large subunit methyltransferase G">
    <location>
        <begin position="1"/>
        <end position="410"/>
    </location>
</feature>
<proteinExistence type="inferred from homology"/>
<accession>B4RZB4</accession>
<accession>F2G966</accession>
<organism>
    <name type="scientific">Alteromonas mediterranea (strain DSM 17117 / CIP 110805 / LMG 28347 / Deep ecotype)</name>
    <dbReference type="NCBI Taxonomy" id="1774373"/>
    <lineage>
        <taxon>Bacteria</taxon>
        <taxon>Pseudomonadati</taxon>
        <taxon>Pseudomonadota</taxon>
        <taxon>Gammaproteobacteria</taxon>
        <taxon>Alteromonadales</taxon>
        <taxon>Alteromonadaceae</taxon>
        <taxon>Alteromonas/Salinimonas group</taxon>
        <taxon>Alteromonas</taxon>
    </lineage>
</organism>
<evidence type="ECO:0000255" key="1">
    <source>
        <dbReference type="HAMAP-Rule" id="MF_01859"/>
    </source>
</evidence>
<reference key="1">
    <citation type="journal article" date="2008" name="ISME J.">
        <title>Comparative genomics of two ecotypes of the marine planktonic copiotroph Alteromonas macleodii suggests alternative lifestyles associated with different kinds of particulate organic matter.</title>
        <authorList>
            <person name="Ivars-Martinez E."/>
            <person name="Martin-Cuadrado A.-B."/>
            <person name="D'Auria G."/>
            <person name="Mira A."/>
            <person name="Ferriera S."/>
            <person name="Johnson J."/>
            <person name="Friedman R."/>
            <person name="Rodriguez-Valera F."/>
        </authorList>
    </citation>
    <scope>NUCLEOTIDE SEQUENCE [LARGE SCALE GENOMIC DNA]</scope>
    <source>
        <strain>DSM 17117 / CIP 110805 / LMG 28347 / Deep ecotype</strain>
    </source>
</reference>
<sequence length="410" mass="45313">MNTEFIFADRQLSLIRYPEKHQHVSLQAWDSADELVIEHLESLLSENELSIGDNESTPSLMIFNDDFGALGCWFSHLAPYWVSDSYISLRSLHENLKANSLIRASEGSCTQELKTSPVKTLTSVESASFKPACAPAVVVIKVPRALALLEQQLIDLQAYITPETQVIATGKVKAITKSALNLFEKYIGPTTTSLAKKKSRLIFATPRDSLKQATSPYPTRWQCKSTMGAALIIDNLANTFARQSLDIGARIMLEHMTVSANDVVVDLGCGNGVLGVNALSLAPDAKVIFVDESYMALESARLNVLNNFPDKIEQCEFVASNCLETLLNRENKPAVTKILCNPPFHQQNAITDHIAWQMFTDSRDLLVKSGHLVVVGNRHLEYHIKLKKLFGGAKVLASDKKFVILGTAKR</sequence>
<comment type="function">
    <text evidence="1">Specifically methylates the guanine in position 1835 (m2G1835) of 23S rRNA.</text>
</comment>
<comment type="catalytic activity">
    <reaction evidence="1">
        <text>guanosine(1835) in 23S rRNA + S-adenosyl-L-methionine = N(2)-methylguanosine(1835) in 23S rRNA + S-adenosyl-L-homocysteine + H(+)</text>
        <dbReference type="Rhea" id="RHEA:42744"/>
        <dbReference type="Rhea" id="RHEA-COMP:10217"/>
        <dbReference type="Rhea" id="RHEA-COMP:10218"/>
        <dbReference type="ChEBI" id="CHEBI:15378"/>
        <dbReference type="ChEBI" id="CHEBI:57856"/>
        <dbReference type="ChEBI" id="CHEBI:59789"/>
        <dbReference type="ChEBI" id="CHEBI:74269"/>
        <dbReference type="ChEBI" id="CHEBI:74481"/>
        <dbReference type="EC" id="2.1.1.174"/>
    </reaction>
</comment>
<comment type="subcellular location">
    <subcellularLocation>
        <location evidence="1">Cytoplasm</location>
    </subcellularLocation>
</comment>
<comment type="similarity">
    <text evidence="1">Belongs to the methyltransferase superfamily. RlmG family.</text>
</comment>